<comment type="function">
    <text evidence="1">Blocker of potassium channels (Kv).</text>
</comment>
<comment type="subcellular location">
    <subcellularLocation>
        <location evidence="2">Secreted</location>
    </subcellularLocation>
</comment>
<comment type="tissue specificity">
    <text evidence="3">Expressed by the venom gland.</text>
</comment>
<comment type="domain">
    <text evidence="1">Has the structural arrangement of an alpha-helix connected to a beta-sheet by disulfide bonds (CSalpha/beta).</text>
</comment>
<comment type="PTM">
    <text evidence="2">The N-terminus is blocked.</text>
</comment>
<comment type="mass spectrometry">
    <text>Monoisotopic mass.</text>
</comment>
<comment type="similarity">
    <text evidence="3">Belongs to the short scorpion toxin superfamily. Potassium channel inhibitor family. Alpha-KTx 17 subfamily.</text>
</comment>
<evidence type="ECO:0000250" key="1">
    <source>
        <dbReference type="UniProtKB" id="Q95NJ8"/>
    </source>
</evidence>
<evidence type="ECO:0000269" key="2">
    <source>
    </source>
</evidence>
<evidence type="ECO:0000305" key="3"/>
<sequence>QRQCERLRDCYKYCMSPKRCTYGTCYCEPSP</sequence>
<protein>
    <recommendedName>
        <fullName>Toxin BmKK16</fullName>
    </recommendedName>
</protein>
<reference key="1">
    <citation type="journal article" date="2012" name="Proteomics">
        <title>Short-chain peptides identification of scorpion Buthus martensi Karsch venom by employing high orthogonal 2D-HPLC system and tandem mass spectrometry.</title>
        <authorList>
            <person name="Xu J."/>
            <person name="Zhang X."/>
            <person name="Guo Z."/>
            <person name="Yan J."/>
            <person name="Yu L."/>
            <person name="Li X."/>
            <person name="Xue X."/>
            <person name="Liang X."/>
        </authorList>
    </citation>
    <scope>PROTEIN SEQUENCE</scope>
    <scope>SUBCELLULAR LOCATION</scope>
    <scope>MASS SPECTROMETRY</scope>
    <scope>PYROGLUTAMATE FORMATION AT GLN-1</scope>
    <scope>AMIDATION AT PRO-31</scope>
    <source>
        <tissue>Venom</tissue>
    </source>
</reference>
<name>KA17G_OLIMR</name>
<organism>
    <name type="scientific">Olivierus martensii</name>
    <name type="common">Manchurian scorpion</name>
    <name type="synonym">Mesobuthus martensii</name>
    <dbReference type="NCBI Taxonomy" id="34649"/>
    <lineage>
        <taxon>Eukaryota</taxon>
        <taxon>Metazoa</taxon>
        <taxon>Ecdysozoa</taxon>
        <taxon>Arthropoda</taxon>
        <taxon>Chelicerata</taxon>
        <taxon>Arachnida</taxon>
        <taxon>Scorpiones</taxon>
        <taxon>Buthida</taxon>
        <taxon>Buthoidea</taxon>
        <taxon>Buthidae</taxon>
        <taxon>Olivierus</taxon>
    </lineage>
</organism>
<keyword id="KW-0027">Amidation</keyword>
<keyword id="KW-0903">Direct protein sequencing</keyword>
<keyword id="KW-1015">Disulfide bond</keyword>
<keyword id="KW-0872">Ion channel impairing toxin</keyword>
<keyword id="KW-0632">Potassium channel impairing toxin</keyword>
<keyword id="KW-0873">Pyrrolidone carboxylic acid</keyword>
<keyword id="KW-0964">Secreted</keyword>
<keyword id="KW-0800">Toxin</keyword>
<keyword id="KW-1220">Voltage-gated potassium channel impairing toxin</keyword>
<proteinExistence type="evidence at protein level"/>
<feature type="chain" id="PRO_0000431730" description="Toxin BmKK16">
    <location>
        <begin position="1"/>
        <end position="31"/>
    </location>
</feature>
<feature type="modified residue" description="Pyrrolidone carboxylic acid" evidence="2">
    <location>
        <position position="1"/>
    </location>
</feature>
<feature type="modified residue" description="Proline amide" evidence="2">
    <location>
        <position position="31"/>
    </location>
</feature>
<feature type="disulfide bond" evidence="1">
    <location>
        <begin position="4"/>
        <end position="20"/>
    </location>
</feature>
<feature type="disulfide bond" evidence="1">
    <location>
        <begin position="10"/>
        <end position="25"/>
    </location>
</feature>
<feature type="disulfide bond" evidence="1">
    <location>
        <begin position="14"/>
        <end position="27"/>
    </location>
</feature>
<feature type="unsure residue" description="L or I">
    <location>
        <position position="7"/>
    </location>
</feature>
<accession>P0DMR9</accession>
<dbReference type="SMR" id="P0DMR9"/>
<dbReference type="GO" id="GO:0005576">
    <property type="term" value="C:extracellular region"/>
    <property type="evidence" value="ECO:0007669"/>
    <property type="project" value="UniProtKB-SubCell"/>
</dbReference>
<dbReference type="GO" id="GO:0015459">
    <property type="term" value="F:potassium channel regulator activity"/>
    <property type="evidence" value="ECO:0007669"/>
    <property type="project" value="UniProtKB-KW"/>
</dbReference>
<dbReference type="GO" id="GO:0090729">
    <property type="term" value="F:toxin activity"/>
    <property type="evidence" value="ECO:0007669"/>
    <property type="project" value="UniProtKB-KW"/>
</dbReference>